<gene>
    <name type="ordered locus">Os10g0489400</name>
    <name type="ordered locus">LOC_Os10g34770</name>
    <name type="ORF">B1288B10.5</name>
    <name type="ORF">OSJNBb0049A16.7</name>
</gene>
<name>RIP7_ORYSJ</name>
<sequence length="162" mass="17194">MAAAAASTKIVAVVVAVLLAILEMPSCAVARRHHHDHHDKPGHHDGGFPAVMTVNGFEKGEDGGGPAACDGHYHSDGELIVALSTEWFAGGRRCHRRIRITPSEHGRRGGGGGRRAVEATVVDECDSRRGCKDDVVDSSPAVWRALGLDTDSGEVRVTWSDV</sequence>
<keyword id="KW-1185">Reference proteome</keyword>
<keyword id="KW-0964">Secreted</keyword>
<keyword id="KW-0732">Signal</keyword>
<organism>
    <name type="scientific">Oryza sativa subsp. japonica</name>
    <name type="common">Rice</name>
    <dbReference type="NCBI Taxonomy" id="39947"/>
    <lineage>
        <taxon>Eukaryota</taxon>
        <taxon>Viridiplantae</taxon>
        <taxon>Streptophyta</taxon>
        <taxon>Embryophyta</taxon>
        <taxon>Tracheophyta</taxon>
        <taxon>Spermatophyta</taxon>
        <taxon>Magnoliopsida</taxon>
        <taxon>Liliopsida</taxon>
        <taxon>Poales</taxon>
        <taxon>Poaceae</taxon>
        <taxon>BOP clade</taxon>
        <taxon>Oryzoideae</taxon>
        <taxon>Oryzeae</taxon>
        <taxon>Oryzinae</taxon>
        <taxon>Oryza</taxon>
        <taxon>Oryza sativa</taxon>
    </lineage>
</organism>
<reference key="1">
    <citation type="journal article" date="2003" name="Science">
        <title>In-depth view of structure, activity, and evolution of rice chromosome 10.</title>
        <authorList>
            <person name="Yu Y."/>
            <person name="Rambo T."/>
            <person name="Currie J."/>
            <person name="Saski C."/>
            <person name="Kim H.-R."/>
            <person name="Collura K."/>
            <person name="Thompson S."/>
            <person name="Simmons J."/>
            <person name="Yang T.-J."/>
            <person name="Nah G."/>
            <person name="Patel A.J."/>
            <person name="Thurmond S."/>
            <person name="Henry D."/>
            <person name="Oates R."/>
            <person name="Palmer M."/>
            <person name="Pries G."/>
            <person name="Gibson J."/>
            <person name="Anderson H."/>
            <person name="Paradkar M."/>
            <person name="Crane L."/>
            <person name="Dale J."/>
            <person name="Carver M.B."/>
            <person name="Wood T."/>
            <person name="Frisch D."/>
            <person name="Engler F."/>
            <person name="Soderlund C."/>
            <person name="Palmer L.E."/>
            <person name="Teytelman L."/>
            <person name="Nascimento L."/>
            <person name="De la Bastide M."/>
            <person name="Spiegel L."/>
            <person name="Ware D."/>
            <person name="O'Shaughnessy A."/>
            <person name="Dike S."/>
            <person name="Dedhia N."/>
            <person name="Preston R."/>
            <person name="Huang E."/>
            <person name="Ferraro K."/>
            <person name="Kuit K."/>
            <person name="Miller B."/>
            <person name="Zutavern T."/>
            <person name="Katzenberger F."/>
            <person name="Muller S."/>
            <person name="Balija V."/>
            <person name="Martienssen R.A."/>
            <person name="Stein L."/>
            <person name="Minx P."/>
            <person name="Johnson D."/>
            <person name="Cordum H."/>
            <person name="Mardis E."/>
            <person name="Cheng Z."/>
            <person name="Jiang J."/>
            <person name="Wilson R."/>
            <person name="McCombie W.R."/>
            <person name="Wing R.A."/>
            <person name="Yuan Q."/>
            <person name="Ouyang S."/>
            <person name="Liu J."/>
            <person name="Jones K.M."/>
            <person name="Gansberger K."/>
            <person name="Moffat K."/>
            <person name="Hill J."/>
            <person name="Tsitrin T."/>
            <person name="Overton L."/>
            <person name="Bera J."/>
            <person name="Kim M."/>
            <person name="Jin S."/>
            <person name="Tallon L."/>
            <person name="Ciecko A."/>
            <person name="Pai G."/>
            <person name="Van Aken S."/>
            <person name="Utterback T."/>
            <person name="Reidmuller S."/>
            <person name="Bormann J."/>
            <person name="Feldblyum T."/>
            <person name="Hsiao J."/>
            <person name="Zismann V."/>
            <person name="Blunt S."/>
            <person name="de Vazeille A.R."/>
            <person name="Shaffer T."/>
            <person name="Koo H."/>
            <person name="Suh B."/>
            <person name="Yang Q."/>
            <person name="Haas B."/>
            <person name="Peterson J."/>
            <person name="Pertea M."/>
            <person name="Volfovsky N."/>
            <person name="Wortman J."/>
            <person name="White O."/>
            <person name="Salzberg S.L."/>
            <person name="Fraser C.M."/>
            <person name="Buell C.R."/>
            <person name="Messing J."/>
            <person name="Song R."/>
            <person name="Fuks G."/>
            <person name="Llaca V."/>
            <person name="Kovchak S."/>
            <person name="Young S."/>
            <person name="Bowers J.E."/>
            <person name="Paterson A.H."/>
            <person name="Johns M.A."/>
            <person name="Mao L."/>
            <person name="Pan H."/>
            <person name="Dean R.A."/>
        </authorList>
    </citation>
    <scope>NUCLEOTIDE SEQUENCE [LARGE SCALE GENOMIC DNA]</scope>
    <source>
        <strain>cv. Nipponbare</strain>
    </source>
</reference>
<reference key="2">
    <citation type="journal article" date="2005" name="Nature">
        <title>The map-based sequence of the rice genome.</title>
        <authorList>
            <consortium name="International rice genome sequencing project (IRGSP)"/>
        </authorList>
    </citation>
    <scope>NUCLEOTIDE SEQUENCE [LARGE SCALE GENOMIC DNA]</scope>
    <source>
        <strain>cv. Nipponbare</strain>
    </source>
</reference>
<reference key="3">
    <citation type="journal article" date="2013" name="Rice">
        <title>Improvement of the Oryza sativa Nipponbare reference genome using next generation sequence and optical map data.</title>
        <authorList>
            <person name="Kawahara Y."/>
            <person name="de la Bastide M."/>
            <person name="Hamilton J.P."/>
            <person name="Kanamori H."/>
            <person name="McCombie W.R."/>
            <person name="Ouyang S."/>
            <person name="Schwartz D.C."/>
            <person name="Tanaka T."/>
            <person name="Wu J."/>
            <person name="Zhou S."/>
            <person name="Childs K.L."/>
            <person name="Davidson R.M."/>
            <person name="Lin H."/>
            <person name="Quesada-Ocampo L."/>
            <person name="Vaillancourt B."/>
            <person name="Sakai H."/>
            <person name="Lee S.S."/>
            <person name="Kim J."/>
            <person name="Numa H."/>
            <person name="Itoh T."/>
            <person name="Buell C.R."/>
            <person name="Matsumoto T."/>
        </authorList>
    </citation>
    <scope>GENOME REANNOTATION</scope>
    <source>
        <strain>cv. Nipponbare</strain>
    </source>
</reference>
<evidence type="ECO:0000255" key="1"/>
<evidence type="ECO:0000305" key="2"/>
<protein>
    <recommendedName>
        <fullName>Putative ripening-related protein 7</fullName>
    </recommendedName>
</protein>
<accession>Q7XD65</accession>
<accession>Q8W5J5</accession>
<comment type="subcellular location">
    <subcellularLocation>
        <location evidence="2">Secreted</location>
    </subcellularLocation>
</comment>
<comment type="similarity">
    <text evidence="2">Belongs to the kiwellin family.</text>
</comment>
<feature type="signal peptide" evidence="1">
    <location>
        <begin position="1"/>
        <end position="30"/>
    </location>
</feature>
<feature type="chain" id="PRO_0000045974" description="Putative ripening-related protein 7">
    <location>
        <begin position="31"/>
        <end position="162"/>
    </location>
</feature>
<dbReference type="EMBL" id="AC090120">
    <property type="protein sequence ID" value="AAL31056.1"/>
    <property type="molecule type" value="Genomic_DNA"/>
</dbReference>
<dbReference type="EMBL" id="AC146481">
    <property type="protein sequence ID" value="AAR87367.1"/>
    <property type="molecule type" value="Genomic_DNA"/>
</dbReference>
<dbReference type="EMBL" id="DP000086">
    <property type="protein sequence ID" value="AAP54378.1"/>
    <property type="molecule type" value="Genomic_DNA"/>
</dbReference>
<dbReference type="EMBL" id="AP014966">
    <property type="status" value="NOT_ANNOTATED_CDS"/>
    <property type="molecule type" value="Genomic_DNA"/>
</dbReference>
<dbReference type="SMR" id="Q7XD65"/>
<dbReference type="FunCoup" id="Q7XD65">
    <property type="interactions" value="3"/>
</dbReference>
<dbReference type="PaxDb" id="39947-Q7XD65"/>
<dbReference type="InParanoid" id="Q7XD65"/>
<dbReference type="Proteomes" id="UP000000763">
    <property type="component" value="Chromosome 10"/>
</dbReference>
<dbReference type="Proteomes" id="UP000059680">
    <property type="component" value="Chromosome 10"/>
</dbReference>
<dbReference type="GO" id="GO:0005576">
    <property type="term" value="C:extracellular region"/>
    <property type="evidence" value="ECO:0007669"/>
    <property type="project" value="UniProtKB-SubCell"/>
</dbReference>
<dbReference type="CDD" id="cd22270">
    <property type="entry name" value="DPBB_kiwellin-like"/>
    <property type="match status" value="1"/>
</dbReference>
<dbReference type="Gene3D" id="2.40.40.10">
    <property type="entry name" value="RlpA-like domain"/>
    <property type="match status" value="1"/>
</dbReference>
<dbReference type="InterPro" id="IPR039271">
    <property type="entry name" value="Kiwellin-like"/>
</dbReference>
<dbReference type="InterPro" id="IPR036908">
    <property type="entry name" value="RlpA-like_sf"/>
</dbReference>
<dbReference type="PANTHER" id="PTHR33191">
    <property type="entry name" value="RIPENING-RELATED PROTEIN 2-RELATED"/>
    <property type="match status" value="1"/>
</dbReference>
<dbReference type="PANTHER" id="PTHR33191:SF56">
    <property type="entry name" value="RIPENING-RELATED PROTEIN 7-RELATED"/>
    <property type="match status" value="1"/>
</dbReference>
<dbReference type="Pfam" id="PF24300">
    <property type="entry name" value="KWL1"/>
    <property type="match status" value="1"/>
</dbReference>
<dbReference type="SUPFAM" id="SSF50685">
    <property type="entry name" value="Barwin-like endoglucanases"/>
    <property type="match status" value="1"/>
</dbReference>
<proteinExistence type="inferred from homology"/>